<organism>
    <name type="scientific">Arabidopsis thaliana</name>
    <name type="common">Mouse-ear cress</name>
    <dbReference type="NCBI Taxonomy" id="3702"/>
    <lineage>
        <taxon>Eukaryota</taxon>
        <taxon>Viridiplantae</taxon>
        <taxon>Streptophyta</taxon>
        <taxon>Embryophyta</taxon>
        <taxon>Tracheophyta</taxon>
        <taxon>Spermatophyta</taxon>
        <taxon>Magnoliopsida</taxon>
        <taxon>eudicotyledons</taxon>
        <taxon>Gunneridae</taxon>
        <taxon>Pentapetalae</taxon>
        <taxon>rosids</taxon>
        <taxon>malvids</taxon>
        <taxon>Brassicales</taxon>
        <taxon>Brassicaceae</taxon>
        <taxon>Camelineae</taxon>
        <taxon>Arabidopsis</taxon>
    </lineage>
</organism>
<name>WRK20_ARATH</name>
<proteinExistence type="evidence at transcript level"/>
<protein>
    <recommendedName>
        <fullName>Probable WRKY transcription factor 20</fullName>
    </recommendedName>
    <alternativeName>
        <fullName>WRKY DNA-binding protein 20</fullName>
    </alternativeName>
</protein>
<dbReference type="EMBL" id="AF425837">
    <property type="protein sequence ID" value="AAL13050.1"/>
    <property type="molecule type" value="mRNA"/>
</dbReference>
<dbReference type="EMBL" id="AL078465">
    <property type="protein sequence ID" value="CAB43860.1"/>
    <property type="status" value="ALT_SEQ"/>
    <property type="molecule type" value="Genomic_DNA"/>
</dbReference>
<dbReference type="EMBL" id="AL161565">
    <property type="protein sequence ID" value="CAB79519.1"/>
    <property type="status" value="ALT_SEQ"/>
    <property type="molecule type" value="Genomic_DNA"/>
</dbReference>
<dbReference type="EMBL" id="CP002687">
    <property type="protein sequence ID" value="AEE85230.1"/>
    <property type="molecule type" value="Genomic_DNA"/>
</dbReference>
<dbReference type="EMBL" id="CP002687">
    <property type="protein sequence ID" value="AEE85231.1"/>
    <property type="molecule type" value="Genomic_DNA"/>
</dbReference>
<dbReference type="EMBL" id="AY045892">
    <property type="protein sequence ID" value="AAK76566.1"/>
    <property type="molecule type" value="mRNA"/>
</dbReference>
<dbReference type="EMBL" id="AY150436">
    <property type="protein sequence ID" value="AAN12978.1"/>
    <property type="molecule type" value="mRNA"/>
</dbReference>
<dbReference type="PIR" id="T08930">
    <property type="entry name" value="T08930"/>
</dbReference>
<dbReference type="RefSeq" id="NP_567752.1">
    <molecule id="Q93WV0-2"/>
    <property type="nucleotide sequence ID" value="NM_118798.2"/>
</dbReference>
<dbReference type="RefSeq" id="NP_849450.1">
    <molecule id="Q93WV0-1"/>
    <property type="nucleotide sequence ID" value="NM_179119.5"/>
</dbReference>
<dbReference type="SMR" id="Q93WV0"/>
<dbReference type="BioGRID" id="14058">
    <property type="interactions" value="14"/>
</dbReference>
<dbReference type="FunCoup" id="Q93WV0">
    <property type="interactions" value="1796"/>
</dbReference>
<dbReference type="IntAct" id="Q93WV0">
    <property type="interactions" value="13"/>
</dbReference>
<dbReference type="STRING" id="3702.Q93WV0"/>
<dbReference type="GlyGen" id="Q93WV0">
    <property type="glycosylation" value="5 sites, 1 O-linked glycan (2 sites)"/>
</dbReference>
<dbReference type="iPTMnet" id="Q93WV0"/>
<dbReference type="PaxDb" id="3702-AT4G26640.2"/>
<dbReference type="ProteomicsDB" id="232453">
    <molecule id="Q93WV0-1"/>
</dbReference>
<dbReference type="EnsemblPlants" id="AT4G26640.1">
    <molecule id="Q93WV0-2"/>
    <property type="protein sequence ID" value="AT4G26640.1"/>
    <property type="gene ID" value="AT4G26640"/>
</dbReference>
<dbReference type="EnsemblPlants" id="AT4G26640.2">
    <molecule id="Q93WV0-1"/>
    <property type="protein sequence ID" value="AT4G26640.2"/>
    <property type="gene ID" value="AT4G26640"/>
</dbReference>
<dbReference type="GeneID" id="828771"/>
<dbReference type="Gramene" id="AT4G26640.1">
    <molecule id="Q93WV0-2"/>
    <property type="protein sequence ID" value="AT4G26640.1"/>
    <property type="gene ID" value="AT4G26640"/>
</dbReference>
<dbReference type="Gramene" id="AT4G26640.2">
    <molecule id="Q93WV0-1"/>
    <property type="protein sequence ID" value="AT4G26640.2"/>
    <property type="gene ID" value="AT4G26640"/>
</dbReference>
<dbReference type="KEGG" id="ath:AT4G26640"/>
<dbReference type="Araport" id="AT4G26640"/>
<dbReference type="TAIR" id="AT4G26640">
    <property type="gene designation" value="WRKY20"/>
</dbReference>
<dbReference type="eggNOG" id="ENOG502QRXJ">
    <property type="taxonomic scope" value="Eukaryota"/>
</dbReference>
<dbReference type="HOGENOM" id="CLU_012086_4_1_1"/>
<dbReference type="InParanoid" id="Q93WV0"/>
<dbReference type="OMA" id="MERQSHT"/>
<dbReference type="PhylomeDB" id="Q93WV0"/>
<dbReference type="PRO" id="PR:Q93WV0"/>
<dbReference type="Proteomes" id="UP000006548">
    <property type="component" value="Chromosome 4"/>
</dbReference>
<dbReference type="ExpressionAtlas" id="Q93WV0">
    <property type="expression patterns" value="baseline and differential"/>
</dbReference>
<dbReference type="GO" id="GO:0005634">
    <property type="term" value="C:nucleus"/>
    <property type="evidence" value="ECO:0007669"/>
    <property type="project" value="UniProtKB-SubCell"/>
</dbReference>
<dbReference type="GO" id="GO:0003700">
    <property type="term" value="F:DNA-binding transcription factor activity"/>
    <property type="evidence" value="ECO:0000250"/>
    <property type="project" value="TAIR"/>
</dbReference>
<dbReference type="GO" id="GO:0046872">
    <property type="term" value="F:metal ion binding"/>
    <property type="evidence" value="ECO:0007669"/>
    <property type="project" value="UniProtKB-KW"/>
</dbReference>
<dbReference type="GO" id="GO:0000976">
    <property type="term" value="F:transcription cis-regulatory region binding"/>
    <property type="evidence" value="ECO:0000353"/>
    <property type="project" value="TAIR"/>
</dbReference>
<dbReference type="GO" id="GO:0045893">
    <property type="term" value="P:positive regulation of DNA-templated transcription"/>
    <property type="evidence" value="ECO:0000314"/>
    <property type="project" value="TAIR"/>
</dbReference>
<dbReference type="GO" id="GO:0009961">
    <property type="term" value="P:response to 1-aminocyclopropane-1-carboxylic acid"/>
    <property type="evidence" value="ECO:0000270"/>
    <property type="project" value="TAIR"/>
</dbReference>
<dbReference type="GO" id="GO:0009611">
    <property type="term" value="P:response to wounding"/>
    <property type="evidence" value="ECO:0000270"/>
    <property type="project" value="TAIR"/>
</dbReference>
<dbReference type="FunFam" id="2.20.25.80:FF:000006">
    <property type="entry name" value="WRKY transcription factor"/>
    <property type="match status" value="1"/>
</dbReference>
<dbReference type="FunFam" id="2.20.25.80:FF:000001">
    <property type="entry name" value="WRKY transcription factor 33"/>
    <property type="match status" value="1"/>
</dbReference>
<dbReference type="Gene3D" id="2.20.25.80">
    <property type="entry name" value="WRKY domain"/>
    <property type="match status" value="2"/>
</dbReference>
<dbReference type="InterPro" id="IPR003657">
    <property type="entry name" value="WRKY_dom"/>
</dbReference>
<dbReference type="InterPro" id="IPR036576">
    <property type="entry name" value="WRKY_dom_sf"/>
</dbReference>
<dbReference type="InterPro" id="IPR044810">
    <property type="entry name" value="WRKY_plant"/>
</dbReference>
<dbReference type="PANTHER" id="PTHR31221:SF360">
    <property type="entry name" value="WRKY DOMAIN-CONTAINING PROTEIN"/>
    <property type="match status" value="1"/>
</dbReference>
<dbReference type="PANTHER" id="PTHR31221">
    <property type="entry name" value="WRKY TRANSCRIPTION FACTOR PROTEIN 1-RELATED"/>
    <property type="match status" value="1"/>
</dbReference>
<dbReference type="Pfam" id="PF03106">
    <property type="entry name" value="WRKY"/>
    <property type="match status" value="2"/>
</dbReference>
<dbReference type="SMART" id="SM00774">
    <property type="entry name" value="WRKY"/>
    <property type="match status" value="2"/>
</dbReference>
<dbReference type="SUPFAM" id="SSF118290">
    <property type="entry name" value="WRKY DNA-binding domain"/>
    <property type="match status" value="2"/>
</dbReference>
<dbReference type="PROSITE" id="PS50811">
    <property type="entry name" value="WRKY"/>
    <property type="match status" value="2"/>
</dbReference>
<comment type="function">
    <text evidence="1">Transcription factor. Interacts specifically with the W box (5'-(T)TGAC[CT]-3'), a frequently occurring elicitor-responsive cis-acting element.</text>
</comment>
<comment type="subcellular location">
    <subcellularLocation>
        <location evidence="1">Nucleus</location>
    </subcellularLocation>
</comment>
<comment type="alternative products">
    <event type="alternative splicing"/>
    <isoform>
        <id>Q93WV0-1</id>
        <name>1</name>
        <sequence type="displayed"/>
    </isoform>
    <isoform>
        <id>Q93WV0-2</id>
        <name>2</name>
        <sequence type="described" ref="VSP_007247 VSP_007248"/>
    </isoform>
</comment>
<comment type="similarity">
    <text evidence="5">Belongs to the WRKY group I family.</text>
</comment>
<comment type="sequence caution" evidence="5">
    <conflict type="erroneous gene model prediction">
        <sequence resource="EMBL-CDS" id="CAB43860"/>
    </conflict>
</comment>
<comment type="sequence caution" evidence="5">
    <conflict type="erroneous gene model prediction">
        <sequence resource="EMBL-CDS" id="CAB79519"/>
    </conflict>
</comment>
<keyword id="KW-0025">Alternative splicing</keyword>
<keyword id="KW-0238">DNA-binding</keyword>
<keyword id="KW-0479">Metal-binding</keyword>
<keyword id="KW-0539">Nucleus</keyword>
<keyword id="KW-1185">Reference proteome</keyword>
<keyword id="KW-0677">Repeat</keyword>
<keyword id="KW-0804">Transcription</keyword>
<keyword id="KW-0805">Transcription regulation</keyword>
<keyword id="KW-0862">Zinc</keyword>
<sequence length="557" mass="61034">MNPQANDRKEFQGDCSATGDLTAKHDSAGGNGGGGARYKLMSPAKLPISRSTDITIPPGLSPTSFLESPVFISNIKPEPSPTTGSLFKPRPVHISASSSSYTGRGFHQNTFTEQKSSEFEFRPPASNMVYAELGKIRSEPPVHFQGQGHGSSHSPSSISDAAGSSSELSRPTPPCQMTPTSSDIPAGSDQEESIQTSQNDSRGSTPSILADDGYNWRKYGQKHVKGSEFPRSYYKCTHPNCEVKKLFERSHDGQITDIIYKGTHDHPKPQPGRRNSGGMAAQEERLDKYPSSTGRDEKGSGVYNLSNPNEQTGNPEVPPISASDDGGEAAASNRNKDEPDDDDPFSKRRRMEGAMEITPLVKPIREPRVVVQTLSEVDILDDGYRWRKYGQKVVRGNPNPRSYYKCTAHGCPVRKHVERASHDPKAVITTYEGKHDHDVPTSKSSSNHEIQPRFRPDETDTISLNLGVGISSDGPNHASNEHQHQNQQLVNQTHPNGVNFRFVHASPMSSYYASLNSGMNQYGQRETKNETQNGDISSLNNSSYPYPPNMGRVQSGP</sequence>
<reference key="1">
    <citation type="submission" date="2001-09" db="EMBL/GenBank/DDBJ databases">
        <title>Arabidopsis thaliana transcription factor WRKY20.</title>
        <authorList>
            <person name="Ulker B."/>
            <person name="Kushnir S."/>
            <person name="Somssich I.E."/>
        </authorList>
    </citation>
    <scope>NUCLEOTIDE SEQUENCE [MRNA] (ISOFORM 1)</scope>
    <source>
        <strain>cv. Columbia</strain>
        <tissue>Flower</tissue>
    </source>
</reference>
<reference key="2">
    <citation type="journal article" date="1999" name="Nature">
        <title>Sequence and analysis of chromosome 4 of the plant Arabidopsis thaliana.</title>
        <authorList>
            <person name="Mayer K.F.X."/>
            <person name="Schueller C."/>
            <person name="Wambutt R."/>
            <person name="Murphy G."/>
            <person name="Volckaert G."/>
            <person name="Pohl T."/>
            <person name="Duesterhoeft A."/>
            <person name="Stiekema W."/>
            <person name="Entian K.-D."/>
            <person name="Terryn N."/>
            <person name="Harris B."/>
            <person name="Ansorge W."/>
            <person name="Brandt P."/>
            <person name="Grivell L.A."/>
            <person name="Rieger M."/>
            <person name="Weichselgartner M."/>
            <person name="de Simone V."/>
            <person name="Obermaier B."/>
            <person name="Mache R."/>
            <person name="Mueller M."/>
            <person name="Kreis M."/>
            <person name="Delseny M."/>
            <person name="Puigdomenech P."/>
            <person name="Watson M."/>
            <person name="Schmidtheini T."/>
            <person name="Reichert B."/>
            <person name="Portetelle D."/>
            <person name="Perez-Alonso M."/>
            <person name="Boutry M."/>
            <person name="Bancroft I."/>
            <person name="Vos P."/>
            <person name="Hoheisel J."/>
            <person name="Zimmermann W."/>
            <person name="Wedler H."/>
            <person name="Ridley P."/>
            <person name="Langham S.-A."/>
            <person name="McCullagh B."/>
            <person name="Bilham L."/>
            <person name="Robben J."/>
            <person name="van der Schueren J."/>
            <person name="Grymonprez B."/>
            <person name="Chuang Y.-J."/>
            <person name="Vandenbussche F."/>
            <person name="Braeken M."/>
            <person name="Weltjens I."/>
            <person name="Voet M."/>
            <person name="Bastiaens I."/>
            <person name="Aert R."/>
            <person name="Defoor E."/>
            <person name="Weitzenegger T."/>
            <person name="Bothe G."/>
            <person name="Ramsperger U."/>
            <person name="Hilbert H."/>
            <person name="Braun M."/>
            <person name="Holzer E."/>
            <person name="Brandt A."/>
            <person name="Peters S."/>
            <person name="van Staveren M."/>
            <person name="Dirkse W."/>
            <person name="Mooijman P."/>
            <person name="Klein Lankhorst R."/>
            <person name="Rose M."/>
            <person name="Hauf J."/>
            <person name="Koetter P."/>
            <person name="Berneiser S."/>
            <person name="Hempel S."/>
            <person name="Feldpausch M."/>
            <person name="Lamberth S."/>
            <person name="Van den Daele H."/>
            <person name="De Keyser A."/>
            <person name="Buysshaert C."/>
            <person name="Gielen J."/>
            <person name="Villarroel R."/>
            <person name="De Clercq R."/>
            <person name="van Montagu M."/>
            <person name="Rogers J."/>
            <person name="Cronin A."/>
            <person name="Quail M.A."/>
            <person name="Bray-Allen S."/>
            <person name="Clark L."/>
            <person name="Doggett J."/>
            <person name="Hall S."/>
            <person name="Kay M."/>
            <person name="Lennard N."/>
            <person name="McLay K."/>
            <person name="Mayes R."/>
            <person name="Pettett A."/>
            <person name="Rajandream M.A."/>
            <person name="Lyne M."/>
            <person name="Benes V."/>
            <person name="Rechmann S."/>
            <person name="Borkova D."/>
            <person name="Bloecker H."/>
            <person name="Scharfe M."/>
            <person name="Grimm M."/>
            <person name="Loehnert T.-H."/>
            <person name="Dose S."/>
            <person name="de Haan M."/>
            <person name="Maarse A.C."/>
            <person name="Schaefer M."/>
            <person name="Mueller-Auer S."/>
            <person name="Gabel C."/>
            <person name="Fuchs M."/>
            <person name="Fartmann B."/>
            <person name="Granderath K."/>
            <person name="Dauner D."/>
            <person name="Herzl A."/>
            <person name="Neumann S."/>
            <person name="Argiriou A."/>
            <person name="Vitale D."/>
            <person name="Liguori R."/>
            <person name="Piravandi E."/>
            <person name="Massenet O."/>
            <person name="Quigley F."/>
            <person name="Clabauld G."/>
            <person name="Muendlein A."/>
            <person name="Felber R."/>
            <person name="Schnabl S."/>
            <person name="Hiller R."/>
            <person name="Schmidt W."/>
            <person name="Lecharny A."/>
            <person name="Aubourg S."/>
            <person name="Chefdor F."/>
            <person name="Cooke R."/>
            <person name="Berger C."/>
            <person name="Monfort A."/>
            <person name="Casacuberta E."/>
            <person name="Gibbons T."/>
            <person name="Weber N."/>
            <person name="Vandenbol M."/>
            <person name="Bargues M."/>
            <person name="Terol J."/>
            <person name="Torres A."/>
            <person name="Perez-Perez A."/>
            <person name="Purnelle B."/>
            <person name="Bent E."/>
            <person name="Johnson S."/>
            <person name="Tacon D."/>
            <person name="Jesse T."/>
            <person name="Heijnen L."/>
            <person name="Schwarz S."/>
            <person name="Scholler P."/>
            <person name="Heber S."/>
            <person name="Francs P."/>
            <person name="Bielke C."/>
            <person name="Frishman D."/>
            <person name="Haase D."/>
            <person name="Lemcke K."/>
            <person name="Mewes H.-W."/>
            <person name="Stocker S."/>
            <person name="Zaccaria P."/>
            <person name="Bevan M."/>
            <person name="Wilson R.K."/>
            <person name="de la Bastide M."/>
            <person name="Habermann K."/>
            <person name="Parnell L."/>
            <person name="Dedhia N."/>
            <person name="Gnoj L."/>
            <person name="Schutz K."/>
            <person name="Huang E."/>
            <person name="Spiegel L."/>
            <person name="Sekhon M."/>
            <person name="Murray J."/>
            <person name="Sheet P."/>
            <person name="Cordes M."/>
            <person name="Abu-Threideh J."/>
            <person name="Stoneking T."/>
            <person name="Kalicki J."/>
            <person name="Graves T."/>
            <person name="Harmon G."/>
            <person name="Edwards J."/>
            <person name="Latreille P."/>
            <person name="Courtney L."/>
            <person name="Cloud J."/>
            <person name="Abbott A."/>
            <person name="Scott K."/>
            <person name="Johnson D."/>
            <person name="Minx P."/>
            <person name="Bentley D."/>
            <person name="Fulton B."/>
            <person name="Miller N."/>
            <person name="Greco T."/>
            <person name="Kemp K."/>
            <person name="Kramer J."/>
            <person name="Fulton L."/>
            <person name="Mardis E."/>
            <person name="Dante M."/>
            <person name="Pepin K."/>
            <person name="Hillier L.W."/>
            <person name="Nelson J."/>
            <person name="Spieth J."/>
            <person name="Ryan E."/>
            <person name="Andrews S."/>
            <person name="Geisel C."/>
            <person name="Layman D."/>
            <person name="Du H."/>
            <person name="Ali J."/>
            <person name="Berghoff A."/>
            <person name="Jones K."/>
            <person name="Drone K."/>
            <person name="Cotton M."/>
            <person name="Joshu C."/>
            <person name="Antonoiu B."/>
            <person name="Zidanic M."/>
            <person name="Strong C."/>
            <person name="Sun H."/>
            <person name="Lamar B."/>
            <person name="Yordan C."/>
            <person name="Ma P."/>
            <person name="Zhong J."/>
            <person name="Preston R."/>
            <person name="Vil D."/>
            <person name="Shekher M."/>
            <person name="Matero A."/>
            <person name="Shah R."/>
            <person name="Swaby I.K."/>
            <person name="O'Shaughnessy A."/>
            <person name="Rodriguez M."/>
            <person name="Hoffman J."/>
            <person name="Till S."/>
            <person name="Granat S."/>
            <person name="Shohdy N."/>
            <person name="Hasegawa A."/>
            <person name="Hameed A."/>
            <person name="Lodhi M."/>
            <person name="Johnson A."/>
            <person name="Chen E."/>
            <person name="Marra M.A."/>
            <person name="Martienssen R."/>
            <person name="McCombie W.R."/>
        </authorList>
    </citation>
    <scope>NUCLEOTIDE SEQUENCE [LARGE SCALE GENOMIC DNA]</scope>
    <source>
        <strain>cv. Columbia</strain>
    </source>
</reference>
<reference key="3">
    <citation type="journal article" date="2017" name="Plant J.">
        <title>Araport11: a complete reannotation of the Arabidopsis thaliana reference genome.</title>
        <authorList>
            <person name="Cheng C.Y."/>
            <person name="Krishnakumar V."/>
            <person name="Chan A.P."/>
            <person name="Thibaud-Nissen F."/>
            <person name="Schobel S."/>
            <person name="Town C.D."/>
        </authorList>
    </citation>
    <scope>GENOME REANNOTATION</scope>
    <source>
        <strain>cv. Columbia</strain>
    </source>
</reference>
<reference key="4">
    <citation type="journal article" date="2003" name="Science">
        <title>Empirical analysis of transcriptional activity in the Arabidopsis genome.</title>
        <authorList>
            <person name="Yamada K."/>
            <person name="Lim J."/>
            <person name="Dale J.M."/>
            <person name="Chen H."/>
            <person name="Shinn P."/>
            <person name="Palm C.J."/>
            <person name="Southwick A.M."/>
            <person name="Wu H.C."/>
            <person name="Kim C.J."/>
            <person name="Nguyen M."/>
            <person name="Pham P.K."/>
            <person name="Cheuk R.F."/>
            <person name="Karlin-Newmann G."/>
            <person name="Liu S.X."/>
            <person name="Lam B."/>
            <person name="Sakano H."/>
            <person name="Wu T."/>
            <person name="Yu G."/>
            <person name="Miranda M."/>
            <person name="Quach H.L."/>
            <person name="Tripp M."/>
            <person name="Chang C.H."/>
            <person name="Lee J.M."/>
            <person name="Toriumi M.J."/>
            <person name="Chan M.M."/>
            <person name="Tang C.C."/>
            <person name="Onodera C.S."/>
            <person name="Deng J.M."/>
            <person name="Akiyama K."/>
            <person name="Ansari Y."/>
            <person name="Arakawa T."/>
            <person name="Banh J."/>
            <person name="Banno F."/>
            <person name="Bowser L."/>
            <person name="Brooks S.Y."/>
            <person name="Carninci P."/>
            <person name="Chao Q."/>
            <person name="Choy N."/>
            <person name="Enju A."/>
            <person name="Goldsmith A.D."/>
            <person name="Gurjal M."/>
            <person name="Hansen N.F."/>
            <person name="Hayashizaki Y."/>
            <person name="Johnson-Hopson C."/>
            <person name="Hsuan V.W."/>
            <person name="Iida K."/>
            <person name="Karnes M."/>
            <person name="Khan S."/>
            <person name="Koesema E."/>
            <person name="Ishida J."/>
            <person name="Jiang P.X."/>
            <person name="Jones T."/>
            <person name="Kawai J."/>
            <person name="Kamiya A."/>
            <person name="Meyers C."/>
            <person name="Nakajima M."/>
            <person name="Narusaka M."/>
            <person name="Seki M."/>
            <person name="Sakurai T."/>
            <person name="Satou M."/>
            <person name="Tamse R."/>
            <person name="Vaysberg M."/>
            <person name="Wallender E.K."/>
            <person name="Wong C."/>
            <person name="Yamamura Y."/>
            <person name="Yuan S."/>
            <person name="Shinozaki K."/>
            <person name="Davis R.W."/>
            <person name="Theologis A."/>
            <person name="Ecker J.R."/>
        </authorList>
    </citation>
    <scope>NUCLEOTIDE SEQUENCE [LARGE SCALE MRNA] (ISOFORM 2)</scope>
    <source>
        <strain>cv. Columbia</strain>
    </source>
</reference>
<gene>
    <name type="primary">WRKY20</name>
    <name type="ordered locus">At4g26640</name>
    <name type="ORF">T15N24.90</name>
</gene>
<accession>Q93WV0</accession>
<accession>Q8H1E9</accession>
<accession>Q94AP6</accession>
<accession>Q9SUA0</accession>
<feature type="chain" id="PRO_0000133662" description="Probable WRKY transcription factor 20">
    <location>
        <begin position="1"/>
        <end position="557"/>
    </location>
</feature>
<feature type="DNA-binding region" description="WRKY 1" evidence="2">
    <location>
        <begin position="205"/>
        <end position="269"/>
    </location>
</feature>
<feature type="DNA-binding region" description="WRKY 2" evidence="2">
    <location>
        <begin position="375"/>
        <end position="440"/>
    </location>
</feature>
<feature type="region of interest" description="Disordered" evidence="3">
    <location>
        <begin position="1"/>
        <end position="36"/>
    </location>
</feature>
<feature type="region of interest" description="Disordered" evidence="3">
    <location>
        <begin position="76"/>
        <end position="215"/>
    </location>
</feature>
<feature type="region of interest" description="Disordered" evidence="3">
    <location>
        <begin position="257"/>
        <end position="348"/>
    </location>
</feature>
<feature type="region of interest" description="Disordered" evidence="3">
    <location>
        <begin position="433"/>
        <end position="486"/>
    </location>
</feature>
<feature type="region of interest" description="Disordered" evidence="3">
    <location>
        <begin position="520"/>
        <end position="557"/>
    </location>
</feature>
<feature type="compositionally biased region" description="Basic and acidic residues" evidence="3">
    <location>
        <begin position="1"/>
        <end position="12"/>
    </location>
</feature>
<feature type="compositionally biased region" description="Polar residues" evidence="3">
    <location>
        <begin position="95"/>
        <end position="114"/>
    </location>
</feature>
<feature type="compositionally biased region" description="Low complexity" evidence="3">
    <location>
        <begin position="151"/>
        <end position="169"/>
    </location>
</feature>
<feature type="compositionally biased region" description="Polar residues" evidence="3">
    <location>
        <begin position="193"/>
        <end position="207"/>
    </location>
</feature>
<feature type="compositionally biased region" description="Basic and acidic residues" evidence="3">
    <location>
        <begin position="282"/>
        <end position="299"/>
    </location>
</feature>
<feature type="compositionally biased region" description="Polar residues" evidence="3">
    <location>
        <begin position="303"/>
        <end position="314"/>
    </location>
</feature>
<feature type="compositionally biased region" description="Low complexity" evidence="3">
    <location>
        <begin position="321"/>
        <end position="332"/>
    </location>
</feature>
<feature type="compositionally biased region" description="Polar residues" evidence="3">
    <location>
        <begin position="520"/>
        <end position="536"/>
    </location>
</feature>
<feature type="binding site" evidence="1">
    <location>
        <position position="236"/>
    </location>
    <ligand>
        <name>Zn(2+)</name>
        <dbReference type="ChEBI" id="CHEBI:29105"/>
    </ligand>
</feature>
<feature type="binding site" evidence="1">
    <location>
        <position position="241"/>
    </location>
    <ligand>
        <name>Zn(2+)</name>
        <dbReference type="ChEBI" id="CHEBI:29105"/>
    </ligand>
</feature>
<feature type="binding site" evidence="1">
    <location>
        <position position="264"/>
    </location>
    <ligand>
        <name>Zn(2+)</name>
        <dbReference type="ChEBI" id="CHEBI:29105"/>
    </ligand>
</feature>
<feature type="binding site" evidence="1">
    <location>
        <position position="266"/>
    </location>
    <ligand>
        <name>Zn(2+)</name>
        <dbReference type="ChEBI" id="CHEBI:29105"/>
    </ligand>
</feature>
<feature type="binding site" evidence="1">
    <location>
        <position position="406"/>
    </location>
    <ligand>
        <name>Zn(2+)</name>
        <dbReference type="ChEBI" id="CHEBI:29105"/>
    </ligand>
</feature>
<feature type="binding site" evidence="1">
    <location>
        <position position="411"/>
    </location>
    <ligand>
        <name>Zn(2+)</name>
        <dbReference type="ChEBI" id="CHEBI:29105"/>
    </ligand>
</feature>
<feature type="binding site" evidence="1">
    <location>
        <position position="435"/>
    </location>
    <ligand>
        <name>Zn(2+)</name>
        <dbReference type="ChEBI" id="CHEBI:29105"/>
    </ligand>
</feature>
<feature type="binding site" evidence="1">
    <location>
        <position position="437"/>
    </location>
    <ligand>
        <name>Zn(2+)</name>
        <dbReference type="ChEBI" id="CHEBI:29105"/>
    </ligand>
</feature>
<feature type="splice variant" id="VSP_007247" description="In isoform 2." evidence="4">
    <location>
        <begin position="1"/>
        <end position="72"/>
    </location>
</feature>
<feature type="splice variant" id="VSP_007248" description="In isoform 2." evidence="4">
    <original>SNIK</original>
    <variation>MILL</variation>
    <location>
        <begin position="73"/>
        <end position="76"/>
    </location>
</feature>
<feature type="sequence conflict" description="In Ref. 4; AAK76566." evidence="5" ref="4">
    <original>Q</original>
    <variation>R</variation>
    <location>
        <position position="108"/>
    </location>
</feature>
<evidence type="ECO:0000250" key="1">
    <source>
        <dbReference type="UniProtKB" id="Q9SI37"/>
    </source>
</evidence>
<evidence type="ECO:0000255" key="2">
    <source>
        <dbReference type="PROSITE-ProRule" id="PRU00223"/>
    </source>
</evidence>
<evidence type="ECO:0000256" key="3">
    <source>
        <dbReference type="SAM" id="MobiDB-lite"/>
    </source>
</evidence>
<evidence type="ECO:0000303" key="4">
    <source>
    </source>
</evidence>
<evidence type="ECO:0000305" key="5"/>